<reference key="1">
    <citation type="submission" date="2006-02" db="EMBL/GenBank/DDBJ databases">
        <title>Complete sequence of chromosome of Jannaschia sp. CCS1.</title>
        <authorList>
            <consortium name="US DOE Joint Genome Institute"/>
            <person name="Copeland A."/>
            <person name="Lucas S."/>
            <person name="Lapidus A."/>
            <person name="Barry K."/>
            <person name="Detter J.C."/>
            <person name="Glavina del Rio T."/>
            <person name="Hammon N."/>
            <person name="Israni S."/>
            <person name="Pitluck S."/>
            <person name="Brettin T."/>
            <person name="Bruce D."/>
            <person name="Han C."/>
            <person name="Tapia R."/>
            <person name="Gilna P."/>
            <person name="Chertkov O."/>
            <person name="Saunders E."/>
            <person name="Schmutz J."/>
            <person name="Larimer F."/>
            <person name="Land M."/>
            <person name="Kyrpides N."/>
            <person name="Lykidis A."/>
            <person name="Moran M.A."/>
            <person name="Belas R."/>
            <person name="Ye W."/>
            <person name="Buchan A."/>
            <person name="Gonzalez J.M."/>
            <person name="Schell M.A."/>
            <person name="Richardson P."/>
        </authorList>
    </citation>
    <scope>NUCLEOTIDE SEQUENCE [LARGE SCALE GENOMIC DNA]</scope>
    <source>
        <strain>CCS1</strain>
    </source>
</reference>
<name>AROC_JANSC</name>
<organism>
    <name type="scientific">Jannaschia sp. (strain CCS1)</name>
    <dbReference type="NCBI Taxonomy" id="290400"/>
    <lineage>
        <taxon>Bacteria</taxon>
        <taxon>Pseudomonadati</taxon>
        <taxon>Pseudomonadota</taxon>
        <taxon>Alphaproteobacteria</taxon>
        <taxon>Rhodobacterales</taxon>
        <taxon>Roseobacteraceae</taxon>
        <taxon>Jannaschia</taxon>
    </lineage>
</organism>
<evidence type="ECO:0000255" key="1">
    <source>
        <dbReference type="HAMAP-Rule" id="MF_00300"/>
    </source>
</evidence>
<proteinExistence type="inferred from homology"/>
<dbReference type="EC" id="4.2.3.5" evidence="1"/>
<dbReference type="EMBL" id="CP000264">
    <property type="protein sequence ID" value="ABD53248.1"/>
    <property type="molecule type" value="Genomic_DNA"/>
</dbReference>
<dbReference type="RefSeq" id="WP_011453457.1">
    <property type="nucleotide sequence ID" value="NC_007802.1"/>
</dbReference>
<dbReference type="SMR" id="Q28VL4"/>
<dbReference type="STRING" id="290400.Jann_0331"/>
<dbReference type="KEGG" id="jan:Jann_0331"/>
<dbReference type="eggNOG" id="COG0082">
    <property type="taxonomic scope" value="Bacteria"/>
</dbReference>
<dbReference type="HOGENOM" id="CLU_034547_0_0_5"/>
<dbReference type="OrthoDB" id="9771806at2"/>
<dbReference type="UniPathway" id="UPA00053">
    <property type="reaction ID" value="UER00090"/>
</dbReference>
<dbReference type="Proteomes" id="UP000008326">
    <property type="component" value="Chromosome"/>
</dbReference>
<dbReference type="GO" id="GO:0005829">
    <property type="term" value="C:cytosol"/>
    <property type="evidence" value="ECO:0007669"/>
    <property type="project" value="TreeGrafter"/>
</dbReference>
<dbReference type="GO" id="GO:0004107">
    <property type="term" value="F:chorismate synthase activity"/>
    <property type="evidence" value="ECO:0007669"/>
    <property type="project" value="UniProtKB-UniRule"/>
</dbReference>
<dbReference type="GO" id="GO:0010181">
    <property type="term" value="F:FMN binding"/>
    <property type="evidence" value="ECO:0007669"/>
    <property type="project" value="TreeGrafter"/>
</dbReference>
<dbReference type="GO" id="GO:0008652">
    <property type="term" value="P:amino acid biosynthetic process"/>
    <property type="evidence" value="ECO:0007669"/>
    <property type="project" value="UniProtKB-KW"/>
</dbReference>
<dbReference type="GO" id="GO:0009073">
    <property type="term" value="P:aromatic amino acid family biosynthetic process"/>
    <property type="evidence" value="ECO:0007669"/>
    <property type="project" value="UniProtKB-KW"/>
</dbReference>
<dbReference type="GO" id="GO:0009423">
    <property type="term" value="P:chorismate biosynthetic process"/>
    <property type="evidence" value="ECO:0007669"/>
    <property type="project" value="UniProtKB-UniRule"/>
</dbReference>
<dbReference type="CDD" id="cd07304">
    <property type="entry name" value="Chorismate_synthase"/>
    <property type="match status" value="1"/>
</dbReference>
<dbReference type="Gene3D" id="3.60.150.10">
    <property type="entry name" value="Chorismate synthase AroC"/>
    <property type="match status" value="1"/>
</dbReference>
<dbReference type="HAMAP" id="MF_00300">
    <property type="entry name" value="Chorismate_synth"/>
    <property type="match status" value="1"/>
</dbReference>
<dbReference type="InterPro" id="IPR000453">
    <property type="entry name" value="Chorismate_synth"/>
</dbReference>
<dbReference type="InterPro" id="IPR035904">
    <property type="entry name" value="Chorismate_synth_AroC_sf"/>
</dbReference>
<dbReference type="InterPro" id="IPR020541">
    <property type="entry name" value="Chorismate_synthase_CS"/>
</dbReference>
<dbReference type="NCBIfam" id="TIGR00033">
    <property type="entry name" value="aroC"/>
    <property type="match status" value="1"/>
</dbReference>
<dbReference type="NCBIfam" id="NF003793">
    <property type="entry name" value="PRK05382.1"/>
    <property type="match status" value="1"/>
</dbReference>
<dbReference type="PANTHER" id="PTHR21085">
    <property type="entry name" value="CHORISMATE SYNTHASE"/>
    <property type="match status" value="1"/>
</dbReference>
<dbReference type="PANTHER" id="PTHR21085:SF0">
    <property type="entry name" value="CHORISMATE SYNTHASE"/>
    <property type="match status" value="1"/>
</dbReference>
<dbReference type="Pfam" id="PF01264">
    <property type="entry name" value="Chorismate_synt"/>
    <property type="match status" value="1"/>
</dbReference>
<dbReference type="PIRSF" id="PIRSF001456">
    <property type="entry name" value="Chorismate_synth"/>
    <property type="match status" value="1"/>
</dbReference>
<dbReference type="SUPFAM" id="SSF103263">
    <property type="entry name" value="Chorismate synthase, AroC"/>
    <property type="match status" value="1"/>
</dbReference>
<dbReference type="PROSITE" id="PS00787">
    <property type="entry name" value="CHORISMATE_SYNTHASE_1"/>
    <property type="match status" value="1"/>
</dbReference>
<dbReference type="PROSITE" id="PS00789">
    <property type="entry name" value="CHORISMATE_SYNTHASE_3"/>
    <property type="match status" value="1"/>
</dbReference>
<sequence>MSMNSYGHLFRVTTWGESHGPALGATVDGCPPGIDVDAAAIQHWLDRRKPGQNKYTTQRREADEVEILSGVYEGQSTGTPIQLMIRNTDQRSKDYGDIAEKFRPGHADITYWQKYGIRDPRGGGRSSARETAARVAAGGVARLALAALVPAVKITGYMVQMGPHGIDRECFDLAQVDENPFWVPDAKAADEWAAYLDGLRKSGDSVGAVIEVRASGLPAGLGAPIYGKLDTDLAAAMMSINAVKGVEIGDGMAAAALTGSANADEIHMGDNGPEYSSNHAGGILGGISTGQDVIVRFAVKPTSSILTPRATITKAGTPAEIITKGRHDPCVGIRAVPVGEAMMACVVLDHILLQRGQIGGKVGETRGKIG</sequence>
<feature type="chain" id="PRO_0000256299" description="Chorismate synthase">
    <location>
        <begin position="1"/>
        <end position="370"/>
    </location>
</feature>
<feature type="binding site" evidence="1">
    <location>
        <position position="48"/>
    </location>
    <ligand>
        <name>NADP(+)</name>
        <dbReference type="ChEBI" id="CHEBI:58349"/>
    </ligand>
</feature>
<feature type="binding site" evidence="1">
    <location>
        <begin position="125"/>
        <end position="127"/>
    </location>
    <ligand>
        <name>FMN</name>
        <dbReference type="ChEBI" id="CHEBI:58210"/>
    </ligand>
</feature>
<feature type="binding site" evidence="1">
    <location>
        <begin position="241"/>
        <end position="242"/>
    </location>
    <ligand>
        <name>FMN</name>
        <dbReference type="ChEBI" id="CHEBI:58210"/>
    </ligand>
</feature>
<feature type="binding site" evidence="1">
    <location>
        <position position="285"/>
    </location>
    <ligand>
        <name>FMN</name>
        <dbReference type="ChEBI" id="CHEBI:58210"/>
    </ligand>
</feature>
<feature type="binding site" evidence="1">
    <location>
        <begin position="300"/>
        <end position="304"/>
    </location>
    <ligand>
        <name>FMN</name>
        <dbReference type="ChEBI" id="CHEBI:58210"/>
    </ligand>
</feature>
<feature type="binding site" evidence="1">
    <location>
        <position position="326"/>
    </location>
    <ligand>
        <name>FMN</name>
        <dbReference type="ChEBI" id="CHEBI:58210"/>
    </ligand>
</feature>
<gene>
    <name evidence="1" type="primary">aroC</name>
    <name type="ordered locus">Jann_0331</name>
</gene>
<accession>Q28VL4</accession>
<keyword id="KW-0028">Amino-acid biosynthesis</keyword>
<keyword id="KW-0057">Aromatic amino acid biosynthesis</keyword>
<keyword id="KW-0274">FAD</keyword>
<keyword id="KW-0285">Flavoprotein</keyword>
<keyword id="KW-0288">FMN</keyword>
<keyword id="KW-0456">Lyase</keyword>
<keyword id="KW-0521">NADP</keyword>
<keyword id="KW-1185">Reference proteome</keyword>
<protein>
    <recommendedName>
        <fullName evidence="1">Chorismate synthase</fullName>
        <shortName evidence="1">CS</shortName>
        <ecNumber evidence="1">4.2.3.5</ecNumber>
    </recommendedName>
    <alternativeName>
        <fullName evidence="1">5-enolpyruvylshikimate-3-phosphate phospholyase</fullName>
    </alternativeName>
</protein>
<comment type="function">
    <text evidence="1">Catalyzes the anti-1,4-elimination of the C-3 phosphate and the C-6 proR hydrogen from 5-enolpyruvylshikimate-3-phosphate (EPSP) to yield chorismate, which is the branch point compound that serves as the starting substrate for the three terminal pathways of aromatic amino acid biosynthesis. This reaction introduces a second double bond into the aromatic ring system.</text>
</comment>
<comment type="catalytic activity">
    <reaction evidence="1">
        <text>5-O-(1-carboxyvinyl)-3-phosphoshikimate = chorismate + phosphate</text>
        <dbReference type="Rhea" id="RHEA:21020"/>
        <dbReference type="ChEBI" id="CHEBI:29748"/>
        <dbReference type="ChEBI" id="CHEBI:43474"/>
        <dbReference type="ChEBI" id="CHEBI:57701"/>
        <dbReference type="EC" id="4.2.3.5"/>
    </reaction>
</comment>
<comment type="cofactor">
    <cofactor evidence="1">
        <name>FMNH2</name>
        <dbReference type="ChEBI" id="CHEBI:57618"/>
    </cofactor>
    <text evidence="1">Reduced FMN (FMNH(2)).</text>
</comment>
<comment type="pathway">
    <text evidence="1">Metabolic intermediate biosynthesis; chorismate biosynthesis; chorismate from D-erythrose 4-phosphate and phosphoenolpyruvate: step 7/7.</text>
</comment>
<comment type="subunit">
    <text evidence="1">Homotetramer.</text>
</comment>
<comment type="similarity">
    <text evidence="1">Belongs to the chorismate synthase family.</text>
</comment>